<reference key="1">
    <citation type="journal article" date="2003" name="Mol. Biol. Evol.">
        <title>The basic helix-loop-helix transcription factor family in plants: a genome-wide study of protein structure and functional diversity.</title>
        <authorList>
            <person name="Heim M.A."/>
            <person name="Jakoby M."/>
            <person name="Werber M."/>
            <person name="Martin C."/>
            <person name="Weisshaar B."/>
            <person name="Bailey P.C."/>
        </authorList>
    </citation>
    <scope>NUCLEOTIDE SEQUENCE [MRNA]</scope>
    <scope>TISSUE SPECIFICITY</scope>
    <scope>GENE FAMILY</scope>
    <scope>NOMENCLATURE</scope>
    <source>
        <strain>cv. Columbia</strain>
    </source>
</reference>
<reference key="2">
    <citation type="journal article" date="2000" name="Nature">
        <title>Sequence and analysis of chromosome 1 of the plant Arabidopsis thaliana.</title>
        <authorList>
            <person name="Theologis A."/>
            <person name="Ecker J.R."/>
            <person name="Palm C.J."/>
            <person name="Federspiel N.A."/>
            <person name="Kaul S."/>
            <person name="White O."/>
            <person name="Alonso J."/>
            <person name="Altafi H."/>
            <person name="Araujo R."/>
            <person name="Bowman C.L."/>
            <person name="Brooks S.Y."/>
            <person name="Buehler E."/>
            <person name="Chan A."/>
            <person name="Chao Q."/>
            <person name="Chen H."/>
            <person name="Cheuk R.F."/>
            <person name="Chin C.W."/>
            <person name="Chung M.K."/>
            <person name="Conn L."/>
            <person name="Conway A.B."/>
            <person name="Conway A.R."/>
            <person name="Creasy T.H."/>
            <person name="Dewar K."/>
            <person name="Dunn P."/>
            <person name="Etgu P."/>
            <person name="Feldblyum T.V."/>
            <person name="Feng J.-D."/>
            <person name="Fong B."/>
            <person name="Fujii C.Y."/>
            <person name="Gill J.E."/>
            <person name="Goldsmith A.D."/>
            <person name="Haas B."/>
            <person name="Hansen N.F."/>
            <person name="Hughes B."/>
            <person name="Huizar L."/>
            <person name="Hunter J.L."/>
            <person name="Jenkins J."/>
            <person name="Johnson-Hopson C."/>
            <person name="Khan S."/>
            <person name="Khaykin E."/>
            <person name="Kim C.J."/>
            <person name="Koo H.L."/>
            <person name="Kremenetskaia I."/>
            <person name="Kurtz D.B."/>
            <person name="Kwan A."/>
            <person name="Lam B."/>
            <person name="Langin-Hooper S."/>
            <person name="Lee A."/>
            <person name="Lee J.M."/>
            <person name="Lenz C.A."/>
            <person name="Li J.H."/>
            <person name="Li Y.-P."/>
            <person name="Lin X."/>
            <person name="Liu S.X."/>
            <person name="Liu Z.A."/>
            <person name="Luros J.S."/>
            <person name="Maiti R."/>
            <person name="Marziali A."/>
            <person name="Militscher J."/>
            <person name="Miranda M."/>
            <person name="Nguyen M."/>
            <person name="Nierman W.C."/>
            <person name="Osborne B.I."/>
            <person name="Pai G."/>
            <person name="Peterson J."/>
            <person name="Pham P.K."/>
            <person name="Rizzo M."/>
            <person name="Rooney T."/>
            <person name="Rowley D."/>
            <person name="Sakano H."/>
            <person name="Salzberg S.L."/>
            <person name="Schwartz J.R."/>
            <person name="Shinn P."/>
            <person name="Southwick A.M."/>
            <person name="Sun H."/>
            <person name="Tallon L.J."/>
            <person name="Tambunga G."/>
            <person name="Toriumi M.J."/>
            <person name="Town C.D."/>
            <person name="Utterback T."/>
            <person name="Van Aken S."/>
            <person name="Vaysberg M."/>
            <person name="Vysotskaia V.S."/>
            <person name="Walker M."/>
            <person name="Wu D."/>
            <person name="Yu G."/>
            <person name="Fraser C.M."/>
            <person name="Venter J.C."/>
            <person name="Davis R.W."/>
        </authorList>
    </citation>
    <scope>NUCLEOTIDE SEQUENCE [LARGE SCALE GENOMIC DNA]</scope>
    <source>
        <strain>cv. Columbia</strain>
    </source>
</reference>
<reference key="3">
    <citation type="journal article" date="2017" name="Plant J.">
        <title>Araport11: a complete reannotation of the Arabidopsis thaliana reference genome.</title>
        <authorList>
            <person name="Cheng C.Y."/>
            <person name="Krishnakumar V."/>
            <person name="Chan A.P."/>
            <person name="Thibaud-Nissen F."/>
            <person name="Schobel S."/>
            <person name="Town C.D."/>
        </authorList>
    </citation>
    <scope>GENOME REANNOTATION</scope>
    <source>
        <strain>cv. Columbia</strain>
    </source>
</reference>
<reference key="4">
    <citation type="journal article" date="2003" name="Science">
        <title>Empirical analysis of transcriptional activity in the Arabidopsis genome.</title>
        <authorList>
            <person name="Yamada K."/>
            <person name="Lim J."/>
            <person name="Dale J.M."/>
            <person name="Chen H."/>
            <person name="Shinn P."/>
            <person name="Palm C.J."/>
            <person name="Southwick A.M."/>
            <person name="Wu H.C."/>
            <person name="Kim C.J."/>
            <person name="Nguyen M."/>
            <person name="Pham P.K."/>
            <person name="Cheuk R.F."/>
            <person name="Karlin-Newmann G."/>
            <person name="Liu S.X."/>
            <person name="Lam B."/>
            <person name="Sakano H."/>
            <person name="Wu T."/>
            <person name="Yu G."/>
            <person name="Miranda M."/>
            <person name="Quach H.L."/>
            <person name="Tripp M."/>
            <person name="Chang C.H."/>
            <person name="Lee J.M."/>
            <person name="Toriumi M.J."/>
            <person name="Chan M.M."/>
            <person name="Tang C.C."/>
            <person name="Onodera C.S."/>
            <person name="Deng J.M."/>
            <person name="Akiyama K."/>
            <person name="Ansari Y."/>
            <person name="Arakawa T."/>
            <person name="Banh J."/>
            <person name="Banno F."/>
            <person name="Bowser L."/>
            <person name="Brooks S.Y."/>
            <person name="Carninci P."/>
            <person name="Chao Q."/>
            <person name="Choy N."/>
            <person name="Enju A."/>
            <person name="Goldsmith A.D."/>
            <person name="Gurjal M."/>
            <person name="Hansen N.F."/>
            <person name="Hayashizaki Y."/>
            <person name="Johnson-Hopson C."/>
            <person name="Hsuan V.W."/>
            <person name="Iida K."/>
            <person name="Karnes M."/>
            <person name="Khan S."/>
            <person name="Koesema E."/>
            <person name="Ishida J."/>
            <person name="Jiang P.X."/>
            <person name="Jones T."/>
            <person name="Kawai J."/>
            <person name="Kamiya A."/>
            <person name="Meyers C."/>
            <person name="Nakajima M."/>
            <person name="Narusaka M."/>
            <person name="Seki M."/>
            <person name="Sakurai T."/>
            <person name="Satou M."/>
            <person name="Tamse R."/>
            <person name="Vaysberg M."/>
            <person name="Wallender E.K."/>
            <person name="Wong C."/>
            <person name="Yamamura Y."/>
            <person name="Yuan S."/>
            <person name="Shinozaki K."/>
            <person name="Davis R.W."/>
            <person name="Theologis A."/>
            <person name="Ecker J.R."/>
        </authorList>
    </citation>
    <scope>NUCLEOTIDE SEQUENCE [LARGE SCALE MRNA]</scope>
    <source>
        <strain>cv. Columbia</strain>
    </source>
</reference>
<reference key="5">
    <citation type="journal article" date="2003" name="Plant Cell">
        <title>The Arabidopsis basic/helix-loop-helix transcription factor family.</title>
        <authorList>
            <person name="Toledo-Ortiz G."/>
            <person name="Huq E."/>
            <person name="Quail P.H."/>
        </authorList>
    </citation>
    <scope>GENE FAMILY</scope>
</reference>
<reference key="6">
    <citation type="journal article" date="2003" name="Plant Cell">
        <title>Update on the basic helix-loop-helix transcription factor gene family in Arabidopsis thaliana.</title>
        <authorList>
            <person name="Bailey P.C."/>
            <person name="Martin C."/>
            <person name="Toledo-Ortiz G."/>
            <person name="Quail P.H."/>
            <person name="Huq E."/>
            <person name="Heim M.A."/>
            <person name="Jakoby M."/>
            <person name="Werber M."/>
            <person name="Weisshaar B."/>
        </authorList>
    </citation>
    <scope>GENE FAMILY</scope>
    <scope>NOMENCLATURE</scope>
</reference>
<proteinExistence type="evidence at protein level"/>
<keyword id="KW-0025">Alternative splicing</keyword>
<keyword id="KW-0238">DNA-binding</keyword>
<keyword id="KW-0539">Nucleus</keyword>
<keyword id="KW-1185">Reference proteome</keyword>
<keyword id="KW-0804">Transcription</keyword>
<keyword id="KW-0805">Transcription regulation</keyword>
<sequence>MANNNNIPHDSISDPSPTDDFFEQILGLSNFSGSSGSGLSGIGGVGPPPMMLQLGSGNEGNHNHMGAIGGGGPVGFHNQMFPLGLSLDQGKGHGFLKPDETGKRFQDDVLDNRCSSMKPIFHGQPMSQPAPPMPHQQSTIRPRVRARRGQATDPHSIAERLRRERIAERIRSLQELVPTVNKTDRAAMIDEIVDYVKFLRLQVKVLSMSRLGGAGAVAPLVTEMPLSSSVEDETQAVWEKWSNDGTERQVAKLMEENVGAAMQLLQSKALCIMPISLAMAIYHSQPPDTSSSIVKPEMNPPP</sequence>
<evidence type="ECO:0000255" key="1">
    <source>
        <dbReference type="PROSITE-ProRule" id="PRU00981"/>
    </source>
</evidence>
<evidence type="ECO:0000256" key="2">
    <source>
        <dbReference type="SAM" id="MobiDB-lite"/>
    </source>
</evidence>
<evidence type="ECO:0000269" key="3">
    <source>
    </source>
</evidence>
<evidence type="ECO:0000305" key="4"/>
<dbReference type="EMBL" id="AF251692">
    <property type="protein sequence ID" value="AAL55714.2"/>
    <property type="molecule type" value="mRNA"/>
</dbReference>
<dbReference type="EMBL" id="AC006550">
    <property type="protein sequence ID" value="AAD25805.1"/>
    <property type="status" value="ALT_SEQ"/>
    <property type="molecule type" value="Genomic_DNA"/>
</dbReference>
<dbReference type="EMBL" id="CP002684">
    <property type="protein sequence ID" value="AEE27518.1"/>
    <property type="molecule type" value="Genomic_DNA"/>
</dbReference>
<dbReference type="EMBL" id="AY054469">
    <property type="protein sequence ID" value="AAK96661.1"/>
    <property type="molecule type" value="mRNA"/>
</dbReference>
<dbReference type="EMBL" id="AY114633">
    <property type="protein sequence ID" value="AAM47952.1"/>
    <property type="molecule type" value="mRNA"/>
</dbReference>
<dbReference type="PIR" id="B86161">
    <property type="entry name" value="B86161"/>
</dbReference>
<dbReference type="RefSeq" id="NP_001184895.1">
    <property type="nucleotide sequence ID" value="NM_001197966.1"/>
</dbReference>
<dbReference type="RefSeq" id="NP_563672.1">
    <molecule id="Q93Y00-1"/>
    <property type="nucleotide sequence ID" value="NM_100185.3"/>
</dbReference>
<dbReference type="SMR" id="Q93Y00"/>
<dbReference type="BioGRID" id="24681">
    <property type="interactions" value="56"/>
</dbReference>
<dbReference type="FunCoup" id="Q93Y00">
    <property type="interactions" value="2209"/>
</dbReference>
<dbReference type="IntAct" id="Q93Y00">
    <property type="interactions" value="57"/>
</dbReference>
<dbReference type="STRING" id="3702.Q93Y00"/>
<dbReference type="PaxDb" id="3702-AT1G03040.1"/>
<dbReference type="EnsemblPlants" id="AT1G03040.1">
    <molecule id="Q93Y00-1"/>
    <property type="protein sequence ID" value="AT1G03040.1"/>
    <property type="gene ID" value="AT1G03040"/>
</dbReference>
<dbReference type="GeneID" id="839446"/>
<dbReference type="Gramene" id="AT1G03040.1">
    <molecule id="Q93Y00-1"/>
    <property type="protein sequence ID" value="AT1G03040.1"/>
    <property type="gene ID" value="AT1G03040"/>
</dbReference>
<dbReference type="KEGG" id="ath:AT1G03040"/>
<dbReference type="Araport" id="AT1G03040"/>
<dbReference type="TAIR" id="AT1G03040"/>
<dbReference type="eggNOG" id="ENOG502QPM5">
    <property type="taxonomic scope" value="Eukaryota"/>
</dbReference>
<dbReference type="InParanoid" id="Q93Y00"/>
<dbReference type="OrthoDB" id="759159at2759"/>
<dbReference type="PhylomeDB" id="Q93Y00"/>
<dbReference type="PRO" id="PR:Q93Y00"/>
<dbReference type="Proteomes" id="UP000006548">
    <property type="component" value="Chromosome 1"/>
</dbReference>
<dbReference type="ExpressionAtlas" id="Q93Y00">
    <property type="expression patterns" value="baseline and differential"/>
</dbReference>
<dbReference type="GO" id="GO:0005634">
    <property type="term" value="C:nucleus"/>
    <property type="evidence" value="ECO:0007669"/>
    <property type="project" value="UniProtKB-SubCell"/>
</dbReference>
<dbReference type="GO" id="GO:0003677">
    <property type="term" value="F:DNA binding"/>
    <property type="evidence" value="ECO:0007669"/>
    <property type="project" value="UniProtKB-KW"/>
</dbReference>
<dbReference type="GO" id="GO:0003700">
    <property type="term" value="F:DNA-binding transcription factor activity"/>
    <property type="evidence" value="ECO:0000250"/>
    <property type="project" value="TAIR"/>
</dbReference>
<dbReference type="GO" id="GO:0046983">
    <property type="term" value="F:protein dimerization activity"/>
    <property type="evidence" value="ECO:0007669"/>
    <property type="project" value="InterPro"/>
</dbReference>
<dbReference type="FunFam" id="4.10.280.10:FF:000044">
    <property type="entry name" value="Basic helix-loop-helix transcription factor"/>
    <property type="match status" value="1"/>
</dbReference>
<dbReference type="Gene3D" id="4.10.280.10">
    <property type="entry name" value="Helix-loop-helix DNA-binding domain"/>
    <property type="match status" value="1"/>
</dbReference>
<dbReference type="InterPro" id="IPR011598">
    <property type="entry name" value="bHLH_dom"/>
</dbReference>
<dbReference type="InterPro" id="IPR036638">
    <property type="entry name" value="HLH_DNA-bd_sf"/>
</dbReference>
<dbReference type="InterPro" id="IPR045843">
    <property type="entry name" value="IND-like"/>
</dbReference>
<dbReference type="PANTHER" id="PTHR16223">
    <property type="entry name" value="TRANSCRIPTION FACTOR BHLH83-RELATED"/>
    <property type="match status" value="1"/>
</dbReference>
<dbReference type="PANTHER" id="PTHR16223:SF200">
    <property type="entry name" value="TRANSCRIPTION FACTOR UNE12-RELATED"/>
    <property type="match status" value="1"/>
</dbReference>
<dbReference type="Pfam" id="PF00010">
    <property type="entry name" value="HLH"/>
    <property type="match status" value="1"/>
</dbReference>
<dbReference type="SMART" id="SM00353">
    <property type="entry name" value="HLH"/>
    <property type="match status" value="1"/>
</dbReference>
<dbReference type="SUPFAM" id="SSF47459">
    <property type="entry name" value="HLH, helix-loop-helix DNA-binding domain"/>
    <property type="match status" value="1"/>
</dbReference>
<dbReference type="PROSITE" id="PS50888">
    <property type="entry name" value="BHLH"/>
    <property type="match status" value="1"/>
</dbReference>
<protein>
    <recommendedName>
        <fullName>Transcription factor bHLH7</fullName>
    </recommendedName>
    <alternativeName>
        <fullName>Basic helix-loop-helix protein 7</fullName>
        <shortName>AtbHLH7</shortName>
        <shortName>bHLH 7</shortName>
    </alternativeName>
    <alternativeName>
        <fullName>Transcription factor EN 92</fullName>
    </alternativeName>
    <alternativeName>
        <fullName>bHLH transcription factor bHLH007</fullName>
    </alternativeName>
</protein>
<gene>
    <name type="primary">BHLH7</name>
    <name type="synonym">EN92</name>
    <name type="ordered locus">At1g03040</name>
    <name type="ORF">F10O3.14</name>
</gene>
<name>BH007_ARATH</name>
<organism>
    <name type="scientific">Arabidopsis thaliana</name>
    <name type="common">Mouse-ear cress</name>
    <dbReference type="NCBI Taxonomy" id="3702"/>
    <lineage>
        <taxon>Eukaryota</taxon>
        <taxon>Viridiplantae</taxon>
        <taxon>Streptophyta</taxon>
        <taxon>Embryophyta</taxon>
        <taxon>Tracheophyta</taxon>
        <taxon>Spermatophyta</taxon>
        <taxon>Magnoliopsida</taxon>
        <taxon>eudicotyledons</taxon>
        <taxon>Gunneridae</taxon>
        <taxon>Pentapetalae</taxon>
        <taxon>rosids</taxon>
        <taxon>malvids</taxon>
        <taxon>Brassicales</taxon>
        <taxon>Brassicaceae</taxon>
        <taxon>Camelineae</taxon>
        <taxon>Arabidopsis</taxon>
    </lineage>
</organism>
<accession>Q93Y00</accession>
<accession>Q9SA66</accession>
<feature type="chain" id="PRO_0000358726" description="Transcription factor bHLH7">
    <location>
        <begin position="1"/>
        <end position="302"/>
    </location>
</feature>
<feature type="domain" description="bHLH" evidence="1">
    <location>
        <begin position="150"/>
        <end position="199"/>
    </location>
</feature>
<feature type="region of interest" description="Disordered" evidence="2">
    <location>
        <begin position="124"/>
        <end position="154"/>
    </location>
</feature>
<comment type="subunit">
    <text evidence="4">Homodimer.</text>
</comment>
<comment type="interaction">
    <interactant intactId="EBI-4442198">
        <id>Q93Y00</id>
    </interactant>
    <interactant intactId="EBI-15195341">
        <id>F4I3E6</id>
        <label>At1g49830</label>
    </interactant>
    <organismsDiffer>false</organismsDiffer>
    <experiments>4</experiments>
</comment>
<comment type="interaction">
    <interactant intactId="EBI-4442198">
        <id>Q93Y00</id>
    </interactant>
    <interactant intactId="EBI-3133192">
        <id>Q94JL3</id>
        <label>BHLH112</label>
    </interactant>
    <organismsDiffer>false</organismsDiffer>
    <experiments>3</experiments>
</comment>
<comment type="interaction">
    <interactant intactId="EBI-4442198">
        <id>Q93Y00</id>
    </interactant>
    <interactant intactId="EBI-15194527">
        <id>Q8GXT3</id>
        <label>BHLH123</label>
    </interactant>
    <organismsDiffer>false</organismsDiffer>
    <experiments>3</experiments>
</comment>
<comment type="interaction">
    <interactant intactId="EBI-4442198">
        <id>Q93Y00</id>
    </interactant>
    <interactant intactId="EBI-15195839">
        <id>Q7XHI5</id>
        <label>BHLH133</label>
    </interactant>
    <organismsDiffer>false</organismsDiffer>
    <experiments>3</experiments>
</comment>
<comment type="interaction">
    <interactant intactId="EBI-4442198">
        <id>Q93Y00</id>
    </interactant>
    <interactant intactId="EBI-4427748">
        <id>Q7XJU2</id>
        <label>BHLH153</label>
    </interactant>
    <organismsDiffer>false</organismsDiffer>
    <experiments>4</experiments>
</comment>
<comment type="interaction">
    <interactant intactId="EBI-4442198">
        <id>Q93Y00</id>
    </interactant>
    <interactant intactId="EBI-15195083">
        <id>Q7XJU1</id>
        <label>BHLH154</label>
    </interactant>
    <organismsDiffer>false</organismsDiffer>
    <experiments>3</experiments>
</comment>
<comment type="interaction">
    <interactant intactId="EBI-4442198">
        <id>Q93Y00</id>
    </interactant>
    <interactant intactId="EBI-4437532">
        <id>Q9SN74</id>
        <label>BHLH47</label>
    </interactant>
    <organismsDiffer>false</organismsDiffer>
    <experiments>3</experiments>
</comment>
<comment type="interaction">
    <interactant intactId="EBI-4442198">
        <id>Q93Y00</id>
    </interactant>
    <interactant intactId="EBI-15192111">
        <id>Q8S3D1</id>
        <label>BHLH68</label>
    </interactant>
    <organismsDiffer>false</organismsDiffer>
    <experiments>4</experiments>
</comment>
<comment type="interaction">
    <interactant intactId="EBI-4442198">
        <id>Q93Y00</id>
    </interactant>
    <interactant intactId="EBI-15195343">
        <id>Q9ZUG9</id>
        <label>LRL1</label>
    </interactant>
    <organismsDiffer>false</organismsDiffer>
    <experiments>3</experiments>
</comment>
<comment type="interaction">
    <interactant intactId="EBI-4442198">
        <id>Q93Y00</id>
    </interactant>
    <interactant intactId="EBI-4424338">
        <id>Q9C707</id>
        <label>RHD6</label>
    </interactant>
    <organismsDiffer>false</organismsDiffer>
    <experiments>3</experiments>
</comment>
<comment type="subcellular location">
    <subcellularLocation>
        <location evidence="1">Nucleus</location>
    </subcellularLocation>
</comment>
<comment type="alternative products">
    <event type="alternative splicing"/>
    <isoform>
        <id>Q93Y00-1</id>
        <name>1</name>
        <sequence type="displayed"/>
    </isoform>
    <text>A number of isoforms are produced. According to EST sequences.</text>
</comment>
<comment type="tissue specificity">
    <text evidence="3">Expressed constitutively in roots, leaves, stems and flowers.</text>
</comment>
<comment type="sequence caution" evidence="4">
    <conflict type="erroneous gene model prediction">
        <sequence resource="EMBL-CDS" id="AAD25805"/>
    </conflict>
</comment>